<reference key="1">
    <citation type="journal article" date="2006" name="PLoS Genet.">
        <title>The complete genome sequence and comparative genome analysis of the high pathogenicity Yersinia enterocolitica strain 8081.</title>
        <authorList>
            <person name="Thomson N.R."/>
            <person name="Howard S."/>
            <person name="Wren B.W."/>
            <person name="Holden M.T.G."/>
            <person name="Crossman L."/>
            <person name="Challis G.L."/>
            <person name="Churcher C."/>
            <person name="Mungall K."/>
            <person name="Brooks K."/>
            <person name="Chillingworth T."/>
            <person name="Feltwell T."/>
            <person name="Abdellah Z."/>
            <person name="Hauser H."/>
            <person name="Jagels K."/>
            <person name="Maddison M."/>
            <person name="Moule S."/>
            <person name="Sanders M."/>
            <person name="Whitehead S."/>
            <person name="Quail M.A."/>
            <person name="Dougan G."/>
            <person name="Parkhill J."/>
            <person name="Prentice M.B."/>
        </authorList>
    </citation>
    <scope>NUCLEOTIDE SEQUENCE [LARGE SCALE GENOMIC DNA]</scope>
    <source>
        <strain>NCTC 13174 / 8081</strain>
    </source>
</reference>
<accession>A1JJN8</accession>
<feature type="chain" id="PRO_0000297414" description="3-methyl-2-oxobutanoate hydroxymethyltransferase">
    <location>
        <begin position="1"/>
        <end position="265"/>
    </location>
</feature>
<feature type="active site" description="Proton acceptor" evidence="1">
    <location>
        <position position="181"/>
    </location>
</feature>
<feature type="binding site" evidence="1">
    <location>
        <begin position="45"/>
        <end position="46"/>
    </location>
    <ligand>
        <name>3-methyl-2-oxobutanoate</name>
        <dbReference type="ChEBI" id="CHEBI:11851"/>
    </ligand>
</feature>
<feature type="binding site" evidence="1">
    <location>
        <position position="45"/>
    </location>
    <ligand>
        <name>Mg(2+)</name>
        <dbReference type="ChEBI" id="CHEBI:18420"/>
    </ligand>
</feature>
<feature type="binding site" evidence="1">
    <location>
        <position position="84"/>
    </location>
    <ligand>
        <name>3-methyl-2-oxobutanoate</name>
        <dbReference type="ChEBI" id="CHEBI:11851"/>
    </ligand>
</feature>
<feature type="binding site" evidence="1">
    <location>
        <position position="84"/>
    </location>
    <ligand>
        <name>Mg(2+)</name>
        <dbReference type="ChEBI" id="CHEBI:18420"/>
    </ligand>
</feature>
<feature type="binding site" evidence="1">
    <location>
        <position position="112"/>
    </location>
    <ligand>
        <name>3-methyl-2-oxobutanoate</name>
        <dbReference type="ChEBI" id="CHEBI:11851"/>
    </ligand>
</feature>
<feature type="binding site" evidence="1">
    <location>
        <position position="114"/>
    </location>
    <ligand>
        <name>Mg(2+)</name>
        <dbReference type="ChEBI" id="CHEBI:18420"/>
    </ligand>
</feature>
<name>PANB_YERE8</name>
<evidence type="ECO:0000255" key="1">
    <source>
        <dbReference type="HAMAP-Rule" id="MF_00156"/>
    </source>
</evidence>
<evidence type="ECO:0000305" key="2"/>
<sequence>MKATTMSHLRQWKLEKRKFATLTAYDASFAQLFAEQGIEVLLVGDSLGMTLQGFDSTLPVTTADVAYHTRAVRRGAPHCLLLADMPFMSYATPEQTFANAAELMRAGANMVKLEGGSWLCDTVRMLAERAVPVCGHLGLTPQSVNIFGGYKVQGREEVAANQLLKDAQALENAGAQLLVLECVPVELAQRVTEALAIPVIGIGAGNVTDGQILVMHDALGITGGHTPKFSKNFLAQSAGDIRAAIKLYIQEVESGAYPAEEHTFQ</sequence>
<proteinExistence type="inferred from homology"/>
<comment type="function">
    <text evidence="1">Catalyzes the reversible reaction in which hydroxymethyl group from 5,10-methylenetetrahydrofolate is transferred onto alpha-ketoisovalerate to form ketopantoate.</text>
</comment>
<comment type="catalytic activity">
    <reaction evidence="1">
        <text>3-methyl-2-oxobutanoate + (6R)-5,10-methylene-5,6,7,8-tetrahydrofolate + H2O = 2-dehydropantoate + (6S)-5,6,7,8-tetrahydrofolate</text>
        <dbReference type="Rhea" id="RHEA:11824"/>
        <dbReference type="ChEBI" id="CHEBI:11561"/>
        <dbReference type="ChEBI" id="CHEBI:11851"/>
        <dbReference type="ChEBI" id="CHEBI:15377"/>
        <dbReference type="ChEBI" id="CHEBI:15636"/>
        <dbReference type="ChEBI" id="CHEBI:57453"/>
        <dbReference type="EC" id="2.1.2.11"/>
    </reaction>
</comment>
<comment type="cofactor">
    <cofactor evidence="1">
        <name>Mg(2+)</name>
        <dbReference type="ChEBI" id="CHEBI:18420"/>
    </cofactor>
    <text evidence="1">Binds 1 Mg(2+) ion per subunit.</text>
</comment>
<comment type="pathway">
    <text evidence="1">Cofactor biosynthesis; (R)-pantothenate biosynthesis; (R)-pantoate from 3-methyl-2-oxobutanoate: step 1/2.</text>
</comment>
<comment type="subunit">
    <text evidence="1">Homodecamer; pentamer of dimers.</text>
</comment>
<comment type="subcellular location">
    <subcellularLocation>
        <location evidence="1">Cytoplasm</location>
    </subcellularLocation>
</comment>
<comment type="similarity">
    <text evidence="1">Belongs to the PanB family.</text>
</comment>
<comment type="sequence caution" evidence="2">
    <conflict type="erroneous initiation">
        <sequence resource="EMBL-CDS" id="CAL10825"/>
    </conflict>
</comment>
<organism>
    <name type="scientific">Yersinia enterocolitica serotype O:8 / biotype 1B (strain NCTC 13174 / 8081)</name>
    <dbReference type="NCBI Taxonomy" id="393305"/>
    <lineage>
        <taxon>Bacteria</taxon>
        <taxon>Pseudomonadati</taxon>
        <taxon>Pseudomonadota</taxon>
        <taxon>Gammaproteobacteria</taxon>
        <taxon>Enterobacterales</taxon>
        <taxon>Yersiniaceae</taxon>
        <taxon>Yersinia</taxon>
    </lineage>
</organism>
<gene>
    <name evidence="1" type="primary">panB</name>
    <name type="ordered locus">YE0720</name>
</gene>
<protein>
    <recommendedName>
        <fullName evidence="1">3-methyl-2-oxobutanoate hydroxymethyltransferase</fullName>
        <ecNumber evidence="1">2.1.2.11</ecNumber>
    </recommendedName>
    <alternativeName>
        <fullName evidence="1">Ketopantoate hydroxymethyltransferase</fullName>
        <shortName evidence="1">KPHMT</shortName>
    </alternativeName>
</protein>
<keyword id="KW-0963">Cytoplasm</keyword>
<keyword id="KW-0460">Magnesium</keyword>
<keyword id="KW-0479">Metal-binding</keyword>
<keyword id="KW-0566">Pantothenate biosynthesis</keyword>
<keyword id="KW-0808">Transferase</keyword>
<dbReference type="EC" id="2.1.2.11" evidence="1"/>
<dbReference type="EMBL" id="AM286415">
    <property type="protein sequence ID" value="CAL10825.1"/>
    <property type="status" value="ALT_INIT"/>
    <property type="molecule type" value="Genomic_DNA"/>
</dbReference>
<dbReference type="RefSeq" id="WP_005167163.1">
    <property type="nucleotide sequence ID" value="NC_008800.1"/>
</dbReference>
<dbReference type="RefSeq" id="YP_001005065.1">
    <property type="nucleotide sequence ID" value="NC_008800.1"/>
</dbReference>
<dbReference type="SMR" id="A1JJN8"/>
<dbReference type="KEGG" id="yen:YE0720"/>
<dbReference type="PATRIC" id="fig|393305.7.peg.814"/>
<dbReference type="eggNOG" id="COG0413">
    <property type="taxonomic scope" value="Bacteria"/>
</dbReference>
<dbReference type="HOGENOM" id="CLU_036645_1_0_6"/>
<dbReference type="OrthoDB" id="9781789at2"/>
<dbReference type="UniPathway" id="UPA00028">
    <property type="reaction ID" value="UER00003"/>
</dbReference>
<dbReference type="Proteomes" id="UP000000642">
    <property type="component" value="Chromosome"/>
</dbReference>
<dbReference type="GO" id="GO:0005737">
    <property type="term" value="C:cytoplasm"/>
    <property type="evidence" value="ECO:0007669"/>
    <property type="project" value="UniProtKB-SubCell"/>
</dbReference>
<dbReference type="GO" id="GO:0003864">
    <property type="term" value="F:3-methyl-2-oxobutanoate hydroxymethyltransferase activity"/>
    <property type="evidence" value="ECO:0007669"/>
    <property type="project" value="UniProtKB-UniRule"/>
</dbReference>
<dbReference type="GO" id="GO:0000287">
    <property type="term" value="F:magnesium ion binding"/>
    <property type="evidence" value="ECO:0007669"/>
    <property type="project" value="TreeGrafter"/>
</dbReference>
<dbReference type="GO" id="GO:0015940">
    <property type="term" value="P:pantothenate biosynthetic process"/>
    <property type="evidence" value="ECO:0007669"/>
    <property type="project" value="UniProtKB-UniRule"/>
</dbReference>
<dbReference type="CDD" id="cd06557">
    <property type="entry name" value="KPHMT-like"/>
    <property type="match status" value="1"/>
</dbReference>
<dbReference type="FunFam" id="3.20.20.60:FF:000003">
    <property type="entry name" value="3-methyl-2-oxobutanoate hydroxymethyltransferase"/>
    <property type="match status" value="1"/>
</dbReference>
<dbReference type="Gene3D" id="3.20.20.60">
    <property type="entry name" value="Phosphoenolpyruvate-binding domains"/>
    <property type="match status" value="1"/>
</dbReference>
<dbReference type="HAMAP" id="MF_00156">
    <property type="entry name" value="PanB"/>
    <property type="match status" value="1"/>
</dbReference>
<dbReference type="InterPro" id="IPR003700">
    <property type="entry name" value="Pantoate_hydroxy_MeTrfase"/>
</dbReference>
<dbReference type="InterPro" id="IPR015813">
    <property type="entry name" value="Pyrv/PenolPyrv_kinase-like_dom"/>
</dbReference>
<dbReference type="InterPro" id="IPR040442">
    <property type="entry name" value="Pyrv_kinase-like_dom_sf"/>
</dbReference>
<dbReference type="NCBIfam" id="TIGR00222">
    <property type="entry name" value="panB"/>
    <property type="match status" value="1"/>
</dbReference>
<dbReference type="NCBIfam" id="NF001452">
    <property type="entry name" value="PRK00311.1"/>
    <property type="match status" value="1"/>
</dbReference>
<dbReference type="PANTHER" id="PTHR20881">
    <property type="entry name" value="3-METHYL-2-OXOBUTANOATE HYDROXYMETHYLTRANSFERASE"/>
    <property type="match status" value="1"/>
</dbReference>
<dbReference type="PANTHER" id="PTHR20881:SF0">
    <property type="entry name" value="3-METHYL-2-OXOBUTANOATE HYDROXYMETHYLTRANSFERASE"/>
    <property type="match status" value="1"/>
</dbReference>
<dbReference type="Pfam" id="PF02548">
    <property type="entry name" value="Pantoate_transf"/>
    <property type="match status" value="1"/>
</dbReference>
<dbReference type="PIRSF" id="PIRSF000388">
    <property type="entry name" value="Pantoate_hydroxy_MeTrfase"/>
    <property type="match status" value="1"/>
</dbReference>
<dbReference type="SUPFAM" id="SSF51621">
    <property type="entry name" value="Phosphoenolpyruvate/pyruvate domain"/>
    <property type="match status" value="1"/>
</dbReference>